<proteinExistence type="evidence at protein level"/>
<dbReference type="EC" id="5.3.3.4" evidence="2"/>
<dbReference type="EMBL" id="X99622">
    <property type="protein sequence ID" value="CAA67935.1"/>
    <property type="molecule type" value="Genomic_DNA"/>
</dbReference>
<dbReference type="RefSeq" id="WP_005573881.1">
    <property type="nucleotide sequence ID" value="NZ_NWMZ01000001.1"/>
</dbReference>
<dbReference type="SMR" id="P95609"/>
<dbReference type="eggNOG" id="COG4829">
    <property type="taxonomic scope" value="Bacteria"/>
</dbReference>
<dbReference type="UniPathway" id="UPA00157">
    <property type="reaction ID" value="UER00260"/>
</dbReference>
<dbReference type="GO" id="GO:0016159">
    <property type="term" value="F:muconolactone delta-isomerase activity"/>
    <property type="evidence" value="ECO:0007669"/>
    <property type="project" value="UniProtKB-EC"/>
</dbReference>
<dbReference type="GO" id="GO:0042952">
    <property type="term" value="P:beta-ketoadipate pathway"/>
    <property type="evidence" value="ECO:0007669"/>
    <property type="project" value="UniProtKB-UniPathway"/>
</dbReference>
<dbReference type="Gene3D" id="3.30.70.1060">
    <property type="entry name" value="Dimeric alpha+beta barrel"/>
    <property type="match status" value="1"/>
</dbReference>
<dbReference type="InterPro" id="IPR011008">
    <property type="entry name" value="Dimeric_a/b-barrel"/>
</dbReference>
<dbReference type="InterPro" id="IPR026029">
    <property type="entry name" value="MLI_dom"/>
</dbReference>
<dbReference type="InterPro" id="IPR003464">
    <property type="entry name" value="Muconolactone_d_Isoase"/>
</dbReference>
<dbReference type="NCBIfam" id="TIGR03221">
    <property type="entry name" value="muco_delta"/>
    <property type="match status" value="1"/>
</dbReference>
<dbReference type="Pfam" id="PF02426">
    <property type="entry name" value="MIase"/>
    <property type="match status" value="1"/>
</dbReference>
<dbReference type="PIRSF" id="PIRSF001486">
    <property type="entry name" value="CatC"/>
    <property type="match status" value="1"/>
</dbReference>
<dbReference type="SUPFAM" id="SSF54909">
    <property type="entry name" value="Dimeric alpha+beta barrel"/>
    <property type="match status" value="1"/>
</dbReference>
<organism>
    <name type="scientific">Rhodococcus opacus</name>
    <name type="common">Nocardia opaca</name>
    <dbReference type="NCBI Taxonomy" id="37919"/>
    <lineage>
        <taxon>Bacteria</taxon>
        <taxon>Bacillati</taxon>
        <taxon>Actinomycetota</taxon>
        <taxon>Actinomycetes</taxon>
        <taxon>Mycobacteriales</taxon>
        <taxon>Nocardiaceae</taxon>
        <taxon>Rhodococcus</taxon>
    </lineage>
</organism>
<comment type="catalytic activity">
    <reaction evidence="2">
        <text>(S)-muconolactone = (4,5-dihydro-5-oxofuran-2-yl)-acetate</text>
        <dbReference type="Rhea" id="RHEA:12348"/>
        <dbReference type="ChEBI" id="CHEBI:58425"/>
        <dbReference type="ChEBI" id="CHEBI:58736"/>
        <dbReference type="EC" id="5.3.3.4"/>
    </reaction>
</comment>
<comment type="pathway">
    <text>Aromatic compound metabolism; beta-ketoadipate pathway; 5-oxo-4,5-dihydro-2-furylacetate from catechol: step 3/3.</text>
</comment>
<comment type="subunit">
    <text evidence="1">Homodecamer.</text>
</comment>
<comment type="similarity">
    <text evidence="4">Belongs to the muconolactone Delta-isomerase family.</text>
</comment>
<evidence type="ECO:0000250" key="1"/>
<evidence type="ECO:0000250" key="2">
    <source>
        <dbReference type="UniProtKB" id="P00948"/>
    </source>
</evidence>
<evidence type="ECO:0000269" key="3">
    <source>
    </source>
</evidence>
<evidence type="ECO:0000305" key="4"/>
<feature type="initiator methionine" description="Removed" evidence="3">
    <location>
        <position position="1"/>
    </location>
</feature>
<feature type="chain" id="PRO_0000089336" description="Muconolactone Delta-isomerase">
    <location>
        <begin position="2"/>
        <end position="93"/>
    </location>
</feature>
<keyword id="KW-0058">Aromatic hydrocarbons catabolism</keyword>
<keyword id="KW-0903">Direct protein sequencing</keyword>
<keyword id="KW-0413">Isomerase</keyword>
<sequence>MALFHVRMDVAIPRDLDPKVRDETIAKEKAYSQELQRSGKWPEIWRIVGQYSNISIFDVESADELHEILWNLPLFPYMNIEIMPLTKHGSDVK</sequence>
<accession>P95609</accession>
<reference key="1">
    <citation type="journal article" date="1997" name="J. Bacteriol.">
        <title>Characterization of catechol catabolic genes from Rhodococcus erythropolis 1CP.</title>
        <authorList>
            <person name="Eulberg D."/>
            <person name="Golovleva L.A."/>
            <person name="Schloemann M."/>
        </authorList>
    </citation>
    <scope>NUCLEOTIDE SEQUENCE [GENOMIC DNA]</scope>
    <scope>PROTEIN SEQUENCE OF 2-21</scope>
    <source>
        <strain>1CP</strain>
    </source>
</reference>
<gene>
    <name type="primary">catC</name>
</gene>
<name>CATC_RHOOP</name>
<protein>
    <recommendedName>
        <fullName>Muconolactone Delta-isomerase</fullName>
        <shortName>MIase</shortName>
        <ecNumber evidence="2">5.3.3.4</ecNumber>
    </recommendedName>
</protein>